<sequence length="101" mass="11602">MSSTLIVQLDMRTLCQEADVTAECVIEIVEHGIVEPSGRTPEDWLFDDQAPLVTKRAVKLHQELELEWEGVALALELLQEVQQLRSENNMLKQRLGRFIQM</sequence>
<protein>
    <recommendedName>
        <fullName evidence="1">Chaperone modulatory protein CbpM</fullName>
    </recommendedName>
</protein>
<feature type="chain" id="PRO_1000065533" description="Chaperone modulatory protein CbpM">
    <location>
        <begin position="1"/>
        <end position="101"/>
    </location>
</feature>
<comment type="function">
    <text evidence="1">Interacts with CbpA and inhibits both the DnaJ-like co-chaperone activity and the DNA binding activity of CbpA. Together with CbpA, modulates the activity of the DnaK chaperone system. Does not inhibit the co-chaperone activity of DnaJ.</text>
</comment>
<comment type="similarity">
    <text evidence="1">Belongs to the CbpM family.</text>
</comment>
<reference key="1">
    <citation type="submission" date="2007-05" db="EMBL/GenBank/DDBJ databases">
        <title>Complete sequence of Pseudomonas putida F1.</title>
        <authorList>
            <consortium name="US DOE Joint Genome Institute"/>
            <person name="Copeland A."/>
            <person name="Lucas S."/>
            <person name="Lapidus A."/>
            <person name="Barry K."/>
            <person name="Detter J.C."/>
            <person name="Glavina del Rio T."/>
            <person name="Hammon N."/>
            <person name="Israni S."/>
            <person name="Dalin E."/>
            <person name="Tice H."/>
            <person name="Pitluck S."/>
            <person name="Chain P."/>
            <person name="Malfatti S."/>
            <person name="Shin M."/>
            <person name="Vergez L."/>
            <person name="Schmutz J."/>
            <person name="Larimer F."/>
            <person name="Land M."/>
            <person name="Hauser L."/>
            <person name="Kyrpides N."/>
            <person name="Lykidis A."/>
            <person name="Parales R."/>
            <person name="Richardson P."/>
        </authorList>
    </citation>
    <scope>NUCLEOTIDE SEQUENCE [LARGE SCALE GENOMIC DNA]</scope>
    <source>
        <strain>ATCC 700007 / DSM 6899 / JCM 31910 / BCRC 17059 / LMG 24140 / F1</strain>
    </source>
</reference>
<gene>
    <name evidence="1" type="primary">cbpM</name>
    <name type="ordered locus">Pput_4725</name>
</gene>
<organism>
    <name type="scientific">Pseudomonas putida (strain ATCC 700007 / DSM 6899 / JCM 31910 / BCRC 17059 / LMG 24140 / F1)</name>
    <dbReference type="NCBI Taxonomy" id="351746"/>
    <lineage>
        <taxon>Bacteria</taxon>
        <taxon>Pseudomonadati</taxon>
        <taxon>Pseudomonadota</taxon>
        <taxon>Gammaproteobacteria</taxon>
        <taxon>Pseudomonadales</taxon>
        <taxon>Pseudomonadaceae</taxon>
        <taxon>Pseudomonas</taxon>
    </lineage>
</organism>
<name>CBPM_PSEP1</name>
<proteinExistence type="inferred from homology"/>
<accession>A5W9N5</accession>
<evidence type="ECO:0000255" key="1">
    <source>
        <dbReference type="HAMAP-Rule" id="MF_01155"/>
    </source>
</evidence>
<dbReference type="EMBL" id="CP000712">
    <property type="protein sequence ID" value="ABQ80845.1"/>
    <property type="molecule type" value="Genomic_DNA"/>
</dbReference>
<dbReference type="SMR" id="A5W9N5"/>
<dbReference type="KEGG" id="ppf:Pput_4725"/>
<dbReference type="eggNOG" id="COG0789">
    <property type="taxonomic scope" value="Bacteria"/>
</dbReference>
<dbReference type="HOGENOM" id="CLU_144710_3_1_6"/>
<dbReference type="Gene3D" id="1.10.1660.10">
    <property type="match status" value="1"/>
</dbReference>
<dbReference type="HAMAP" id="MF_01155">
    <property type="entry name" value="CbpM"/>
    <property type="match status" value="1"/>
</dbReference>
<dbReference type="InterPro" id="IPR022835">
    <property type="entry name" value="CbpM"/>
</dbReference>
<dbReference type="Pfam" id="PF13591">
    <property type="entry name" value="MerR_2"/>
    <property type="match status" value="1"/>
</dbReference>